<feature type="chain" id="PRO_1000080147" description="Small ribosomal subunit protein bS16">
    <location>
        <begin position="1"/>
        <end position="82"/>
    </location>
</feature>
<comment type="similarity">
    <text evidence="1">Belongs to the bacterial ribosomal protein bS16 family.</text>
</comment>
<sequence>MLKIRLTRIGAPKKPCYRIIVTEARSPRDATYTDLVGTYNPMTNPETVIINAEKVLYWIGKGAQPTDTVARLLKKAGIVNSN</sequence>
<name>RS16_DEHMB</name>
<keyword id="KW-0687">Ribonucleoprotein</keyword>
<keyword id="KW-0689">Ribosomal protein</keyword>
<protein>
    <recommendedName>
        <fullName evidence="1">Small ribosomal subunit protein bS16</fullName>
    </recommendedName>
    <alternativeName>
        <fullName evidence="2">30S ribosomal protein S16</fullName>
    </alternativeName>
</protein>
<gene>
    <name evidence="1" type="primary">rpsP</name>
    <name type="ordered locus">DehaBAV1_0542</name>
</gene>
<reference key="1">
    <citation type="submission" date="2007-05" db="EMBL/GenBank/DDBJ databases">
        <title>Complete sequence of Dehalococcoides sp. BAV1.</title>
        <authorList>
            <consortium name="US DOE Joint Genome Institute"/>
            <person name="Copeland A."/>
            <person name="Lucas S."/>
            <person name="Lapidus A."/>
            <person name="Barry K."/>
            <person name="Detter J.C."/>
            <person name="Glavina del Rio T."/>
            <person name="Hammon N."/>
            <person name="Israni S."/>
            <person name="Pitluck S."/>
            <person name="Lowry S."/>
            <person name="Clum A."/>
            <person name="Schmutz J."/>
            <person name="Larimer F."/>
            <person name="Land M."/>
            <person name="Hauser L."/>
            <person name="Kyrpides N."/>
            <person name="Kim E."/>
            <person name="Ritalahti K.M."/>
            <person name="Loeffler F."/>
            <person name="Richardson P."/>
        </authorList>
    </citation>
    <scope>NUCLEOTIDE SEQUENCE [LARGE SCALE GENOMIC DNA]</scope>
    <source>
        <strain>ATCC BAA-2100 / JCM 16839 / KCTC 5957 / BAV1</strain>
    </source>
</reference>
<dbReference type="EMBL" id="CP000688">
    <property type="protein sequence ID" value="ABQ17127.1"/>
    <property type="molecule type" value="Genomic_DNA"/>
</dbReference>
<dbReference type="SMR" id="A5FRP7"/>
<dbReference type="KEGG" id="deb:DehaBAV1_0542"/>
<dbReference type="PATRIC" id="fig|216389.18.peg.587"/>
<dbReference type="HOGENOM" id="CLU_100590_5_0_0"/>
<dbReference type="GO" id="GO:0005737">
    <property type="term" value="C:cytoplasm"/>
    <property type="evidence" value="ECO:0007669"/>
    <property type="project" value="UniProtKB-ARBA"/>
</dbReference>
<dbReference type="GO" id="GO:0015935">
    <property type="term" value="C:small ribosomal subunit"/>
    <property type="evidence" value="ECO:0007669"/>
    <property type="project" value="TreeGrafter"/>
</dbReference>
<dbReference type="GO" id="GO:0003735">
    <property type="term" value="F:structural constituent of ribosome"/>
    <property type="evidence" value="ECO:0007669"/>
    <property type="project" value="InterPro"/>
</dbReference>
<dbReference type="GO" id="GO:0006412">
    <property type="term" value="P:translation"/>
    <property type="evidence" value="ECO:0007669"/>
    <property type="project" value="UniProtKB-UniRule"/>
</dbReference>
<dbReference type="Gene3D" id="3.30.1320.10">
    <property type="match status" value="1"/>
</dbReference>
<dbReference type="HAMAP" id="MF_00385">
    <property type="entry name" value="Ribosomal_bS16"/>
    <property type="match status" value="1"/>
</dbReference>
<dbReference type="InterPro" id="IPR000307">
    <property type="entry name" value="Ribosomal_bS16"/>
</dbReference>
<dbReference type="InterPro" id="IPR020592">
    <property type="entry name" value="Ribosomal_bS16_CS"/>
</dbReference>
<dbReference type="InterPro" id="IPR023803">
    <property type="entry name" value="Ribosomal_bS16_dom_sf"/>
</dbReference>
<dbReference type="NCBIfam" id="TIGR00002">
    <property type="entry name" value="S16"/>
    <property type="match status" value="1"/>
</dbReference>
<dbReference type="PANTHER" id="PTHR12919">
    <property type="entry name" value="30S RIBOSOMAL PROTEIN S16"/>
    <property type="match status" value="1"/>
</dbReference>
<dbReference type="PANTHER" id="PTHR12919:SF20">
    <property type="entry name" value="SMALL RIBOSOMAL SUBUNIT PROTEIN BS16M"/>
    <property type="match status" value="1"/>
</dbReference>
<dbReference type="Pfam" id="PF00886">
    <property type="entry name" value="Ribosomal_S16"/>
    <property type="match status" value="1"/>
</dbReference>
<dbReference type="SUPFAM" id="SSF54565">
    <property type="entry name" value="Ribosomal protein S16"/>
    <property type="match status" value="1"/>
</dbReference>
<dbReference type="PROSITE" id="PS00732">
    <property type="entry name" value="RIBOSOMAL_S16"/>
    <property type="match status" value="1"/>
</dbReference>
<accession>A5FRP7</accession>
<organism>
    <name type="scientific">Dehalococcoides mccartyi (strain ATCC BAA-2100 / JCM 16839 / KCTC 5957 / BAV1)</name>
    <dbReference type="NCBI Taxonomy" id="216389"/>
    <lineage>
        <taxon>Bacteria</taxon>
        <taxon>Bacillati</taxon>
        <taxon>Chloroflexota</taxon>
        <taxon>Dehalococcoidia</taxon>
        <taxon>Dehalococcoidales</taxon>
        <taxon>Dehalococcoidaceae</taxon>
        <taxon>Dehalococcoides</taxon>
    </lineage>
</organism>
<evidence type="ECO:0000255" key="1">
    <source>
        <dbReference type="HAMAP-Rule" id="MF_00385"/>
    </source>
</evidence>
<evidence type="ECO:0000305" key="2"/>
<proteinExistence type="inferred from homology"/>